<feature type="chain" id="PRO_0000293969" description="Elongation factor Tu, plastid">
    <location>
        <begin position="1"/>
        <end position="409"/>
    </location>
</feature>
<feature type="domain" description="tr-type G">
    <location>
        <begin position="10"/>
        <end position="214"/>
    </location>
</feature>
<feature type="region of interest" description="G1" evidence="1">
    <location>
        <begin position="19"/>
        <end position="26"/>
    </location>
</feature>
<feature type="region of interest" description="G2" evidence="1">
    <location>
        <begin position="60"/>
        <end position="64"/>
    </location>
</feature>
<feature type="region of interest" description="G3" evidence="1">
    <location>
        <begin position="81"/>
        <end position="84"/>
    </location>
</feature>
<feature type="region of interest" description="G4" evidence="1">
    <location>
        <begin position="136"/>
        <end position="139"/>
    </location>
</feature>
<feature type="region of interest" description="G5" evidence="1">
    <location>
        <begin position="174"/>
        <end position="176"/>
    </location>
</feature>
<feature type="binding site" evidence="1">
    <location>
        <begin position="19"/>
        <end position="26"/>
    </location>
    <ligand>
        <name>GTP</name>
        <dbReference type="ChEBI" id="CHEBI:37565"/>
    </ligand>
</feature>
<feature type="binding site" evidence="2">
    <location>
        <position position="26"/>
    </location>
    <ligand>
        <name>Mg(2+)</name>
        <dbReference type="ChEBI" id="CHEBI:18420"/>
    </ligand>
</feature>
<feature type="binding site" evidence="1">
    <location>
        <begin position="81"/>
        <end position="85"/>
    </location>
    <ligand>
        <name>GTP</name>
        <dbReference type="ChEBI" id="CHEBI:37565"/>
    </ligand>
</feature>
<feature type="binding site" evidence="1">
    <location>
        <begin position="136"/>
        <end position="139"/>
    </location>
    <ligand>
        <name>GTP</name>
        <dbReference type="ChEBI" id="CHEBI:37565"/>
    </ligand>
</feature>
<feature type="sequence conflict" description="In Ref. 2; ABD33985." evidence="3" ref="2">
    <original>D</original>
    <variation>G</variation>
    <location>
        <position position="139"/>
    </location>
</feature>
<feature type="sequence conflict" description="In Ref. 2; ABD33985." evidence="3" ref="2">
    <original>D</original>
    <variation>E</variation>
    <location>
        <position position="298"/>
    </location>
</feature>
<keyword id="KW-0251">Elongation factor</keyword>
<keyword id="KW-0342">GTP-binding</keyword>
<keyword id="KW-0378">Hydrolase</keyword>
<keyword id="KW-0460">Magnesium</keyword>
<keyword id="KW-0479">Metal-binding</keyword>
<keyword id="KW-0547">Nucleotide-binding</keyword>
<keyword id="KW-0934">Plastid</keyword>
<keyword id="KW-0648">Protein biosynthesis</keyword>
<name>EFTU_HELSJ</name>
<organism>
    <name type="scientific">Helicosporidium sp. subsp. Simulium jonesii</name>
    <name type="common">Green alga</name>
    <dbReference type="NCBI Taxonomy" id="145475"/>
    <lineage>
        <taxon>Eukaryota</taxon>
        <taxon>Viridiplantae</taxon>
        <taxon>Chlorophyta</taxon>
        <taxon>core chlorophytes</taxon>
        <taxon>Trebouxiophyceae</taxon>
        <taxon>Chlorellales</taxon>
        <taxon>Chlorellaceae</taxon>
        <taxon>Helicosporidium</taxon>
    </lineage>
</organism>
<gene>
    <name type="primary">tufA</name>
</gene>
<proteinExistence type="inferred from homology"/>
<accession>Q2EEV7</accession>
<accession>Q6RH24</accession>
<protein>
    <recommendedName>
        <fullName>Elongation factor Tu, plastid</fullName>
        <shortName>EF-Tu</shortName>
        <ecNumber evidence="2">3.6.5.3</ecNumber>
    </recommendedName>
</protein>
<sequence length="409" mass="44683">MAREKFERIKPHINIGTIGHVDHGKTTLTAAITMALASIGNTKGKNYADIDSAPEEKARGITINTTHVEYETAKRHYAHVDCPGHADYIKNMITGAAQMDGAILVVSGADGPMPQTREHIVLAKQVGVPSMVVFINKEDQVDDPEILELVELEVRDLLTSYKFEGEEVPVITGSALLALEAFIKNPKILKGENPWVDKIYNLMDSVDSYIPTPVREIDKPFLMAIEDVFSISGRGTVATGRIERGKIKMGDSIEIIGGSLRKTTTVTGIEMFQKTLTDGVAGDNVGILMRGIQKKEIDRGMVLTKPKSIDPLTSFEAQVYLLTKEEGGRSKGFTIGYRPQFYVRTTDVTGAILNMLSDDNTPLKIASPGDRITMSVKLIQPIALEKNMRFAIREGGKTVGAGVVSKLIN</sequence>
<reference key="1">
    <citation type="journal article" date="2004" name="FEMS Microbiol. Lett.">
        <title>The non-photosynthetic, pathogenic green alga Helicosporidium sp. has retained a modified, functional plastid genome.</title>
        <authorList>
            <person name="Tartar A."/>
            <person name="Boucias D.G."/>
        </authorList>
    </citation>
    <scope>NUCLEOTIDE SEQUENCE [GENOMIC DNA]</scope>
</reference>
<reference key="2">
    <citation type="journal article" date="2006" name="BMC Biol.">
        <title>The complete plastid genome sequence of the parasitic green alga, Helicosporidium sp. is highly reduced and structured.</title>
        <authorList>
            <person name="de Koning A.P."/>
            <person name="Keeling P.J."/>
        </authorList>
    </citation>
    <scope>NUCLEOTIDE SEQUENCE [LARGE SCALE GENOMIC DNA]</scope>
</reference>
<comment type="function">
    <text evidence="2">GTP hydrolase that promotes the GTP-dependent binding of aminoacyl-tRNA to the A-site of ribosomes during protein biosynthesis.</text>
</comment>
<comment type="catalytic activity">
    <reaction evidence="2">
        <text>GTP + H2O = GDP + phosphate + H(+)</text>
        <dbReference type="Rhea" id="RHEA:19669"/>
        <dbReference type="ChEBI" id="CHEBI:15377"/>
        <dbReference type="ChEBI" id="CHEBI:15378"/>
        <dbReference type="ChEBI" id="CHEBI:37565"/>
        <dbReference type="ChEBI" id="CHEBI:43474"/>
        <dbReference type="ChEBI" id="CHEBI:58189"/>
        <dbReference type="EC" id="3.6.5.3"/>
    </reaction>
    <physiologicalReaction direction="left-to-right" evidence="2">
        <dbReference type="Rhea" id="RHEA:19670"/>
    </physiologicalReaction>
</comment>
<comment type="subcellular location">
    <subcellularLocation>
        <location>Plastid</location>
    </subcellularLocation>
</comment>
<comment type="similarity">
    <text evidence="3">Belongs to the TRAFAC class translation factor GTPase superfamily. Classic translation factor GTPase family. EF-Tu/EF-1A subfamily.</text>
</comment>
<dbReference type="EC" id="3.6.5.3" evidence="2"/>
<dbReference type="EMBL" id="AY498714">
    <property type="protein sequence ID" value="AAS21040.1"/>
    <property type="molecule type" value="Genomic_DNA"/>
</dbReference>
<dbReference type="EMBL" id="DQ398104">
    <property type="protein sequence ID" value="ABD33985.1"/>
    <property type="molecule type" value="Genomic_DNA"/>
</dbReference>
<dbReference type="RefSeq" id="YP_635937.1">
    <property type="nucleotide sequence ID" value="NC_008100.1"/>
</dbReference>
<dbReference type="SMR" id="Q2EEV7"/>
<dbReference type="GeneID" id="4100448"/>
<dbReference type="GO" id="GO:0005739">
    <property type="term" value="C:mitochondrion"/>
    <property type="evidence" value="ECO:0007669"/>
    <property type="project" value="TreeGrafter"/>
</dbReference>
<dbReference type="GO" id="GO:0009536">
    <property type="term" value="C:plastid"/>
    <property type="evidence" value="ECO:0007669"/>
    <property type="project" value="UniProtKB-SubCell"/>
</dbReference>
<dbReference type="GO" id="GO:0005525">
    <property type="term" value="F:GTP binding"/>
    <property type="evidence" value="ECO:0007669"/>
    <property type="project" value="UniProtKB-KW"/>
</dbReference>
<dbReference type="GO" id="GO:0003924">
    <property type="term" value="F:GTPase activity"/>
    <property type="evidence" value="ECO:0007669"/>
    <property type="project" value="InterPro"/>
</dbReference>
<dbReference type="GO" id="GO:0003746">
    <property type="term" value="F:translation elongation factor activity"/>
    <property type="evidence" value="ECO:0007669"/>
    <property type="project" value="UniProtKB-KW"/>
</dbReference>
<dbReference type="GO" id="GO:0070125">
    <property type="term" value="P:mitochondrial translational elongation"/>
    <property type="evidence" value="ECO:0007669"/>
    <property type="project" value="TreeGrafter"/>
</dbReference>
<dbReference type="CDD" id="cd01884">
    <property type="entry name" value="EF_Tu"/>
    <property type="match status" value="1"/>
</dbReference>
<dbReference type="CDD" id="cd03697">
    <property type="entry name" value="EFTU_II"/>
    <property type="match status" value="1"/>
</dbReference>
<dbReference type="CDD" id="cd03707">
    <property type="entry name" value="EFTU_III"/>
    <property type="match status" value="1"/>
</dbReference>
<dbReference type="FunFam" id="2.40.30.10:FF:000001">
    <property type="entry name" value="Elongation factor Tu"/>
    <property type="match status" value="1"/>
</dbReference>
<dbReference type="FunFam" id="3.40.50.300:FF:000003">
    <property type="entry name" value="Elongation factor Tu"/>
    <property type="match status" value="1"/>
</dbReference>
<dbReference type="Gene3D" id="3.40.50.300">
    <property type="entry name" value="P-loop containing nucleotide triphosphate hydrolases"/>
    <property type="match status" value="1"/>
</dbReference>
<dbReference type="Gene3D" id="2.40.30.10">
    <property type="entry name" value="Translation factors"/>
    <property type="match status" value="2"/>
</dbReference>
<dbReference type="HAMAP" id="MF_00118_B">
    <property type="entry name" value="EF_Tu_B"/>
    <property type="match status" value="1"/>
</dbReference>
<dbReference type="InterPro" id="IPR041709">
    <property type="entry name" value="EF-Tu_GTP-bd"/>
</dbReference>
<dbReference type="InterPro" id="IPR050055">
    <property type="entry name" value="EF-Tu_GTPase"/>
</dbReference>
<dbReference type="InterPro" id="IPR004161">
    <property type="entry name" value="EFTu-like_2"/>
</dbReference>
<dbReference type="InterPro" id="IPR033720">
    <property type="entry name" value="EFTU_2"/>
</dbReference>
<dbReference type="InterPro" id="IPR031157">
    <property type="entry name" value="G_TR_CS"/>
</dbReference>
<dbReference type="InterPro" id="IPR027417">
    <property type="entry name" value="P-loop_NTPase"/>
</dbReference>
<dbReference type="InterPro" id="IPR005225">
    <property type="entry name" value="Small_GTP-bd"/>
</dbReference>
<dbReference type="InterPro" id="IPR000795">
    <property type="entry name" value="T_Tr_GTP-bd_dom"/>
</dbReference>
<dbReference type="InterPro" id="IPR009000">
    <property type="entry name" value="Transl_B-barrel_sf"/>
</dbReference>
<dbReference type="InterPro" id="IPR009001">
    <property type="entry name" value="Transl_elong_EF1A/Init_IF2_C"/>
</dbReference>
<dbReference type="InterPro" id="IPR004541">
    <property type="entry name" value="Transl_elong_EFTu/EF1A_bac/org"/>
</dbReference>
<dbReference type="InterPro" id="IPR004160">
    <property type="entry name" value="Transl_elong_EFTu/EF1A_C"/>
</dbReference>
<dbReference type="NCBIfam" id="TIGR00485">
    <property type="entry name" value="EF-Tu"/>
    <property type="match status" value="1"/>
</dbReference>
<dbReference type="NCBIfam" id="NF000766">
    <property type="entry name" value="PRK00049.1"/>
    <property type="match status" value="1"/>
</dbReference>
<dbReference type="NCBIfam" id="NF009372">
    <property type="entry name" value="PRK12735.1"/>
    <property type="match status" value="1"/>
</dbReference>
<dbReference type="NCBIfam" id="NF009373">
    <property type="entry name" value="PRK12736.1"/>
    <property type="match status" value="1"/>
</dbReference>
<dbReference type="NCBIfam" id="TIGR00231">
    <property type="entry name" value="small_GTP"/>
    <property type="match status" value="1"/>
</dbReference>
<dbReference type="PANTHER" id="PTHR43721:SF5">
    <property type="entry name" value="ELONGATION FACTOR TU, CHLOROPLASTIC"/>
    <property type="match status" value="1"/>
</dbReference>
<dbReference type="PANTHER" id="PTHR43721">
    <property type="entry name" value="ELONGATION FACTOR TU-RELATED"/>
    <property type="match status" value="1"/>
</dbReference>
<dbReference type="Pfam" id="PF00009">
    <property type="entry name" value="GTP_EFTU"/>
    <property type="match status" value="1"/>
</dbReference>
<dbReference type="Pfam" id="PF03144">
    <property type="entry name" value="GTP_EFTU_D2"/>
    <property type="match status" value="1"/>
</dbReference>
<dbReference type="Pfam" id="PF03143">
    <property type="entry name" value="GTP_EFTU_D3"/>
    <property type="match status" value="1"/>
</dbReference>
<dbReference type="PRINTS" id="PR00315">
    <property type="entry name" value="ELONGATNFCT"/>
</dbReference>
<dbReference type="SUPFAM" id="SSF50465">
    <property type="entry name" value="EF-Tu/eEF-1alpha/eIF2-gamma C-terminal domain"/>
    <property type="match status" value="1"/>
</dbReference>
<dbReference type="SUPFAM" id="SSF52540">
    <property type="entry name" value="P-loop containing nucleoside triphosphate hydrolases"/>
    <property type="match status" value="1"/>
</dbReference>
<dbReference type="SUPFAM" id="SSF50447">
    <property type="entry name" value="Translation proteins"/>
    <property type="match status" value="1"/>
</dbReference>
<dbReference type="PROSITE" id="PS00301">
    <property type="entry name" value="G_TR_1"/>
    <property type="match status" value="1"/>
</dbReference>
<dbReference type="PROSITE" id="PS51722">
    <property type="entry name" value="G_TR_2"/>
    <property type="match status" value="1"/>
</dbReference>
<evidence type="ECO:0000250" key="1"/>
<evidence type="ECO:0000255" key="2">
    <source>
        <dbReference type="HAMAP-Rule" id="MF_00118"/>
    </source>
</evidence>
<evidence type="ECO:0000305" key="3"/>
<geneLocation type="non-photosynthetic plastid"/>